<gene>
    <name type="primary">RAD23B</name>
</gene>
<reference key="1">
    <citation type="submission" date="2006-02" db="EMBL/GenBank/DDBJ databases">
        <authorList>
            <consortium name="NIH - Mammalian Gene Collection (MGC) project"/>
        </authorList>
    </citation>
    <scope>NUCLEOTIDE SEQUENCE [LARGE SCALE MRNA]</scope>
    <source>
        <strain>Hereford</strain>
        <tissue>Hypothalamus</tissue>
    </source>
</reference>
<feature type="chain" id="PRO_0000244596" description="UV excision repair protein RAD23 homolog B">
    <location>
        <begin position="1"/>
        <end position="408"/>
    </location>
</feature>
<feature type="domain" description="Ubiquitin-like" evidence="5">
    <location>
        <begin position="1"/>
        <end position="79"/>
    </location>
</feature>
<feature type="domain" description="UBA 1" evidence="4">
    <location>
        <begin position="188"/>
        <end position="228"/>
    </location>
</feature>
<feature type="domain" description="STI1">
    <location>
        <begin position="273"/>
        <end position="316"/>
    </location>
</feature>
<feature type="domain" description="UBA 2" evidence="4">
    <location>
        <begin position="363"/>
        <end position="403"/>
    </location>
</feature>
<feature type="region of interest" description="Disordered" evidence="6">
    <location>
        <begin position="80"/>
        <end position="176"/>
    </location>
</feature>
<feature type="region of interest" description="Disordered" evidence="6">
    <location>
        <begin position="236"/>
        <end position="274"/>
    </location>
</feature>
<feature type="compositionally biased region" description="Low complexity" evidence="6">
    <location>
        <begin position="80"/>
        <end position="111"/>
    </location>
</feature>
<feature type="compositionally biased region" description="Pro residues" evidence="6">
    <location>
        <begin position="112"/>
        <end position="122"/>
    </location>
</feature>
<feature type="compositionally biased region" description="Low complexity" evidence="6">
    <location>
        <begin position="123"/>
        <end position="143"/>
    </location>
</feature>
<feature type="compositionally biased region" description="Basic and acidic residues" evidence="6">
    <location>
        <begin position="144"/>
        <end position="153"/>
    </location>
</feature>
<feature type="compositionally biased region" description="Low complexity" evidence="6">
    <location>
        <begin position="154"/>
        <end position="174"/>
    </location>
</feature>
<feature type="compositionally biased region" description="Low complexity" evidence="6">
    <location>
        <begin position="255"/>
        <end position="268"/>
    </location>
</feature>
<feature type="modified residue" description="Phosphothreonine" evidence="2">
    <location>
        <position position="155"/>
    </location>
</feature>
<feature type="modified residue" description="Phosphothreonine" evidence="2">
    <location>
        <position position="164"/>
    </location>
</feature>
<feature type="modified residue" description="Phosphoserine" evidence="3">
    <location>
        <position position="174"/>
    </location>
</feature>
<feature type="modified residue" description="Phosphothreonine" evidence="3">
    <location>
        <position position="186"/>
    </location>
</feature>
<feature type="modified residue" description="Phosphoserine" evidence="3">
    <location>
        <position position="199"/>
    </location>
</feature>
<feature type="modified residue" description="Phosphotyrosine" evidence="3">
    <location>
        <position position="202"/>
    </location>
</feature>
<proteinExistence type="evidence at transcript level"/>
<sequence>MLVTLKTLQQQTFKIDIDPDETVRALKEKIESEKGKDAFPVAGQKLIYAGKILNDDTALKEYKIDEKNFVVVMVTKPKAVTTPAPATTQQSNSAATTTVSSSTAPAVTQAPAPAPASAPTPTPVSVTPAPTTASSEPAPASAAKQEKPAERPVETPVATTPTSTDSTSGDSSRSNLFEDATSALVTGQSYENMVTEIMSMGYEREQVIAALRASFNNPDRAVEYLLMGIPGDRESQAVVDPPPAASTGAPQSSVAAAAATTTATTTTTSSGGHPLEFLRNQPQFQQMRQIIQQNPSLLPALLQQIGRENPQLLQQISQHQEHFIQMLNEPVQEAGGQGGGGGGGSGGIAEAGGGHMNYIQVTPQEKEAIERLKALGFPEGLVIQAYFACEKNENLAANFLLQQNFDED</sequence>
<name>RD23B_BOVIN</name>
<accession>Q29RK4</accession>
<comment type="function">
    <text evidence="1">Multiubiquitin chain receptor involved in modulation of proteasomal degradation. Binds to polyubiquitin chains. Proposed to be capable to bind simultaneously to the 26S proteasome and to polyubiquitinated substrates and to deliver ubiquitinated proteins to the proteasome. May play a role in endoplasmic reticulum-associated degradation (ERAD) of misfolded glycoproteins by association with PNGase and delivering deglycosylated proteins to the proteasome (By similarity).</text>
</comment>
<comment type="function">
    <text evidence="1">Involved in global genome nucleotide excision repair (GG-NER) by acting as component of the XPC complex. Cooperatively with CETN2 appears to stabilize XPC. May protect XPC from proteasomal degradation (By similarity).</text>
</comment>
<comment type="function">
    <text evidence="1">The XPC complex is proposed to represent the first factor bound at the sites of DNA damage and together with other core recognition factors, XPA, RPA and the TFIIH complex, is part of the pre-incision (or initial recognition) complex. The XPC complex recognizes a wide spectrum of damaged DNA characterized by distortions of the DNA helix such as single-stranded loops, mismatched bubbles or single-stranded overhangs. The orientation of XPC complex binding appears to be crucial for inducing a productive NER. XPC complex is proposed to recognize and to interact with unpaired bases on the undamaged DNA strand which is followed by recruitment of the TFIIH complex and subsequent scanning for lesions in the opposite strand in a 5'-to-3' direction by the NER machinery. Cyclobutane pyrimidine dimers (CPDs) which are formed upon UV-induced DNA damage esacpe detection by the XPC complex due to a low degree of structural perurbation. Instead they are detected by the UV-DDB complex which in turn recruits and cooperates with the XPC complex in the respective DNA repair. In vitro, the XPC:RAD23B dimer is sufficient to initiate NER; it preferentially binds to cisplatin and UV-damaged double-stranded DNA and also binds to a variety of chemically and structurally diverse DNA adducts. XPC:RAD23B contacts DNA both 5' and 3' of a cisplatin lesion with a preference for the 5' side. XPC:RAD23B induces a bend in DNA upon binding. XPC:RAD23B stimulates the activity of DNA glycosylases TDG and SMUG1 (By similarity).</text>
</comment>
<comment type="subunit">
    <text evidence="1">Component of the XPC complex composed of XPC, RAD23B and CETN2. Interacts with NGLY1 and PSMC1. Interacts with ATXN3. Interacts with PSMD4 and PSMC5. Interacts with AMFR. Interacts with VCP; the interaction is indirect and mediated by NGLY1 (By similarity).</text>
</comment>
<comment type="subcellular location">
    <subcellularLocation>
        <location evidence="1">Nucleus</location>
    </subcellularLocation>
    <subcellularLocation>
        <location evidence="1">Cytoplasm</location>
    </subcellularLocation>
</comment>
<comment type="domain">
    <text evidence="1">The ubiquitin-like domain mediates interaction with MJD.</text>
</comment>
<comment type="similarity">
    <text evidence="7">Belongs to the RAD23 family.</text>
</comment>
<dbReference type="EMBL" id="BC114133">
    <property type="protein sequence ID" value="AAI14134.1"/>
    <property type="molecule type" value="mRNA"/>
</dbReference>
<dbReference type="RefSeq" id="NP_001039775.1">
    <property type="nucleotide sequence ID" value="NM_001046310.1"/>
</dbReference>
<dbReference type="BMRB" id="Q29RK4"/>
<dbReference type="SMR" id="Q29RK4"/>
<dbReference type="FunCoup" id="Q29RK4">
    <property type="interactions" value="3757"/>
</dbReference>
<dbReference type="STRING" id="9913.ENSBTAP00000002506"/>
<dbReference type="PaxDb" id="9913-ENSBTAP00000002506"/>
<dbReference type="PeptideAtlas" id="Q29RK4"/>
<dbReference type="Ensembl" id="ENSBTAT00000002506.5">
    <property type="protein sequence ID" value="ENSBTAP00000002506.3"/>
    <property type="gene ID" value="ENSBTAG00000001926.5"/>
</dbReference>
<dbReference type="GeneID" id="530189"/>
<dbReference type="KEGG" id="bta:530189"/>
<dbReference type="CTD" id="5887"/>
<dbReference type="VEuPathDB" id="HostDB:ENSBTAG00000001926"/>
<dbReference type="VGNC" id="VGNC:33683">
    <property type="gene designation" value="RAD23B"/>
</dbReference>
<dbReference type="eggNOG" id="KOG0011">
    <property type="taxonomic scope" value="Eukaryota"/>
</dbReference>
<dbReference type="GeneTree" id="ENSGT00390000012078"/>
<dbReference type="HOGENOM" id="CLU_040364_0_1_1"/>
<dbReference type="InParanoid" id="Q29RK4"/>
<dbReference type="OMA" id="PHMLEPI"/>
<dbReference type="OrthoDB" id="419317at2759"/>
<dbReference type="TreeFam" id="TF101216"/>
<dbReference type="Reactome" id="R-BTA-532668">
    <property type="pathway name" value="N-glycan trimming in the ER and Calnexin/Calreticulin cycle"/>
</dbReference>
<dbReference type="Reactome" id="R-BTA-5689877">
    <property type="pathway name" value="Josephin domain DUBs"/>
</dbReference>
<dbReference type="Reactome" id="R-BTA-5696394">
    <property type="pathway name" value="DNA Damage Recognition in GG-NER"/>
</dbReference>
<dbReference type="Reactome" id="R-BTA-5696395">
    <property type="pathway name" value="Formation of Incision Complex in GG-NER"/>
</dbReference>
<dbReference type="Proteomes" id="UP000009136">
    <property type="component" value="Chromosome 8"/>
</dbReference>
<dbReference type="Bgee" id="ENSBTAG00000001926">
    <property type="expression patterns" value="Expressed in semimembranosus muscle and 104 other cell types or tissues"/>
</dbReference>
<dbReference type="GO" id="GO:0005829">
    <property type="term" value="C:cytosol"/>
    <property type="evidence" value="ECO:0000318"/>
    <property type="project" value="GO_Central"/>
</dbReference>
<dbReference type="GO" id="GO:0005654">
    <property type="term" value="C:nucleoplasm"/>
    <property type="evidence" value="ECO:0000318"/>
    <property type="project" value="GO_Central"/>
</dbReference>
<dbReference type="GO" id="GO:0000502">
    <property type="term" value="C:proteasome complex"/>
    <property type="evidence" value="ECO:0007669"/>
    <property type="project" value="UniProtKB-KW"/>
</dbReference>
<dbReference type="GO" id="GO:0071942">
    <property type="term" value="C:XPC complex"/>
    <property type="evidence" value="ECO:0000250"/>
    <property type="project" value="UniProtKB"/>
</dbReference>
<dbReference type="GO" id="GO:0003684">
    <property type="term" value="F:damaged DNA binding"/>
    <property type="evidence" value="ECO:0007669"/>
    <property type="project" value="InterPro"/>
</dbReference>
<dbReference type="GO" id="GO:0031593">
    <property type="term" value="F:polyubiquitin modification-dependent protein binding"/>
    <property type="evidence" value="ECO:0000318"/>
    <property type="project" value="GO_Central"/>
</dbReference>
<dbReference type="GO" id="GO:0070628">
    <property type="term" value="F:proteasome binding"/>
    <property type="evidence" value="ECO:0000318"/>
    <property type="project" value="GO_Central"/>
</dbReference>
<dbReference type="GO" id="GO:0043130">
    <property type="term" value="F:ubiquitin binding"/>
    <property type="evidence" value="ECO:0000318"/>
    <property type="project" value="GO_Central"/>
</dbReference>
<dbReference type="GO" id="GO:0006289">
    <property type="term" value="P:nucleotide-excision repair"/>
    <property type="evidence" value="ECO:0007669"/>
    <property type="project" value="InterPro"/>
</dbReference>
<dbReference type="GO" id="GO:0043161">
    <property type="term" value="P:proteasome-mediated ubiquitin-dependent protein catabolic process"/>
    <property type="evidence" value="ECO:0000318"/>
    <property type="project" value="GO_Central"/>
</dbReference>
<dbReference type="CDD" id="cd14377">
    <property type="entry name" value="UBA1_Rad23"/>
    <property type="match status" value="1"/>
</dbReference>
<dbReference type="CDD" id="cd14428">
    <property type="entry name" value="UBA2_HR23B"/>
    <property type="match status" value="1"/>
</dbReference>
<dbReference type="CDD" id="cd16126">
    <property type="entry name" value="Ubl_HR23B"/>
    <property type="match status" value="1"/>
</dbReference>
<dbReference type="FunFam" id="1.10.10.540:FF:000001">
    <property type="entry name" value="UV excision repair protein RAD23 B"/>
    <property type="match status" value="1"/>
</dbReference>
<dbReference type="FunFam" id="1.10.8.10:FF:000002">
    <property type="entry name" value="UV excision repair protein RAD23 homolog"/>
    <property type="match status" value="1"/>
</dbReference>
<dbReference type="FunFam" id="1.10.8.10:FF:000003">
    <property type="entry name" value="UV excision repair protein RAD23 homolog"/>
    <property type="match status" value="1"/>
</dbReference>
<dbReference type="FunFam" id="3.10.20.90:FF:000053">
    <property type="entry name" value="UV excision repair protein RAD23 homolog A"/>
    <property type="match status" value="1"/>
</dbReference>
<dbReference type="Gene3D" id="1.10.8.10">
    <property type="entry name" value="DNA helicase RuvA subunit, C-terminal domain"/>
    <property type="match status" value="2"/>
</dbReference>
<dbReference type="Gene3D" id="3.10.20.90">
    <property type="entry name" value="Phosphatidylinositol 3-kinase Catalytic Subunit, Chain A, domain 1"/>
    <property type="match status" value="1"/>
</dbReference>
<dbReference type="Gene3D" id="1.10.10.540">
    <property type="entry name" value="XPC-binding domain"/>
    <property type="match status" value="1"/>
</dbReference>
<dbReference type="InterPro" id="IPR004806">
    <property type="entry name" value="Rad23"/>
</dbReference>
<dbReference type="InterPro" id="IPR041811">
    <property type="entry name" value="RAD23A/B_UBA1"/>
</dbReference>
<dbReference type="InterPro" id="IPR006636">
    <property type="entry name" value="STI1_HS-bd"/>
</dbReference>
<dbReference type="InterPro" id="IPR015940">
    <property type="entry name" value="UBA"/>
</dbReference>
<dbReference type="InterPro" id="IPR009060">
    <property type="entry name" value="UBA-like_sf"/>
</dbReference>
<dbReference type="InterPro" id="IPR000626">
    <property type="entry name" value="Ubiquitin-like_dom"/>
</dbReference>
<dbReference type="InterPro" id="IPR029071">
    <property type="entry name" value="Ubiquitin-like_domsf"/>
</dbReference>
<dbReference type="InterPro" id="IPR015360">
    <property type="entry name" value="XPC-bd"/>
</dbReference>
<dbReference type="InterPro" id="IPR036353">
    <property type="entry name" value="XPC-bd_sf"/>
</dbReference>
<dbReference type="NCBIfam" id="TIGR00601">
    <property type="entry name" value="rad23"/>
    <property type="match status" value="1"/>
</dbReference>
<dbReference type="PANTHER" id="PTHR10621">
    <property type="entry name" value="UV EXCISION REPAIR PROTEIN RAD23"/>
    <property type="match status" value="1"/>
</dbReference>
<dbReference type="PANTHER" id="PTHR10621:SF13">
    <property type="entry name" value="UV EXCISION REPAIR PROTEIN RAD23 HOMOLOG B"/>
    <property type="match status" value="1"/>
</dbReference>
<dbReference type="Pfam" id="PF00627">
    <property type="entry name" value="UBA"/>
    <property type="match status" value="2"/>
</dbReference>
<dbReference type="Pfam" id="PF00240">
    <property type="entry name" value="ubiquitin"/>
    <property type="match status" value="1"/>
</dbReference>
<dbReference type="Pfam" id="PF09280">
    <property type="entry name" value="XPC-binding"/>
    <property type="match status" value="1"/>
</dbReference>
<dbReference type="PRINTS" id="PR01839">
    <property type="entry name" value="RAD23PROTEIN"/>
</dbReference>
<dbReference type="SMART" id="SM00727">
    <property type="entry name" value="STI1"/>
    <property type="match status" value="1"/>
</dbReference>
<dbReference type="SMART" id="SM00165">
    <property type="entry name" value="UBA"/>
    <property type="match status" value="2"/>
</dbReference>
<dbReference type="SMART" id="SM00213">
    <property type="entry name" value="UBQ"/>
    <property type="match status" value="1"/>
</dbReference>
<dbReference type="SUPFAM" id="SSF46934">
    <property type="entry name" value="UBA-like"/>
    <property type="match status" value="2"/>
</dbReference>
<dbReference type="SUPFAM" id="SSF54236">
    <property type="entry name" value="Ubiquitin-like"/>
    <property type="match status" value="1"/>
</dbReference>
<dbReference type="SUPFAM" id="SSF101238">
    <property type="entry name" value="XPC-binding domain"/>
    <property type="match status" value="1"/>
</dbReference>
<dbReference type="PROSITE" id="PS50030">
    <property type="entry name" value="UBA"/>
    <property type="match status" value="2"/>
</dbReference>
<dbReference type="PROSITE" id="PS50053">
    <property type="entry name" value="UBIQUITIN_2"/>
    <property type="match status" value="1"/>
</dbReference>
<protein>
    <recommendedName>
        <fullName>UV excision repair protein RAD23 homolog B</fullName>
    </recommendedName>
</protein>
<keyword id="KW-0963">Cytoplasm</keyword>
<keyword id="KW-0227">DNA damage</keyword>
<keyword id="KW-0234">DNA repair</keyword>
<keyword id="KW-0539">Nucleus</keyword>
<keyword id="KW-0597">Phosphoprotein</keyword>
<keyword id="KW-0647">Proteasome</keyword>
<keyword id="KW-1185">Reference proteome</keyword>
<keyword id="KW-0677">Repeat</keyword>
<keyword id="KW-0833">Ubl conjugation pathway</keyword>
<organism>
    <name type="scientific">Bos taurus</name>
    <name type="common">Bovine</name>
    <dbReference type="NCBI Taxonomy" id="9913"/>
    <lineage>
        <taxon>Eukaryota</taxon>
        <taxon>Metazoa</taxon>
        <taxon>Chordata</taxon>
        <taxon>Craniata</taxon>
        <taxon>Vertebrata</taxon>
        <taxon>Euteleostomi</taxon>
        <taxon>Mammalia</taxon>
        <taxon>Eutheria</taxon>
        <taxon>Laurasiatheria</taxon>
        <taxon>Artiodactyla</taxon>
        <taxon>Ruminantia</taxon>
        <taxon>Pecora</taxon>
        <taxon>Bovidae</taxon>
        <taxon>Bovinae</taxon>
        <taxon>Bos</taxon>
    </lineage>
</organism>
<evidence type="ECO:0000250" key="1"/>
<evidence type="ECO:0000250" key="2">
    <source>
        <dbReference type="UniProtKB" id="P54727"/>
    </source>
</evidence>
<evidence type="ECO:0000250" key="3">
    <source>
        <dbReference type="UniProtKB" id="Q4KMA2"/>
    </source>
</evidence>
<evidence type="ECO:0000255" key="4">
    <source>
        <dbReference type="PROSITE-ProRule" id="PRU00212"/>
    </source>
</evidence>
<evidence type="ECO:0000255" key="5">
    <source>
        <dbReference type="PROSITE-ProRule" id="PRU00214"/>
    </source>
</evidence>
<evidence type="ECO:0000256" key="6">
    <source>
        <dbReference type="SAM" id="MobiDB-lite"/>
    </source>
</evidence>
<evidence type="ECO:0000305" key="7"/>